<keyword id="KW-0963">Cytoplasm</keyword>
<keyword id="KW-0444">Lipid biosynthesis</keyword>
<keyword id="KW-0443">Lipid metabolism</keyword>
<keyword id="KW-0479">Metal-binding</keyword>
<keyword id="KW-0520">NAD</keyword>
<keyword id="KW-0521">NADP</keyword>
<keyword id="KW-0560">Oxidoreductase</keyword>
<keyword id="KW-0594">Phospholipid biosynthesis</keyword>
<keyword id="KW-1208">Phospholipid metabolism</keyword>
<keyword id="KW-1185">Reference proteome</keyword>
<keyword id="KW-0862">Zinc</keyword>
<dbReference type="EC" id="1.1.1.261" evidence="1 2"/>
<dbReference type="EMBL" id="AE000782">
    <property type="protein sequence ID" value="AAB89576.1"/>
    <property type="molecule type" value="Genomic_DNA"/>
</dbReference>
<dbReference type="PIR" id="A69459">
    <property type="entry name" value="A69459"/>
</dbReference>
<dbReference type="RefSeq" id="WP_010879170.1">
    <property type="nucleotide sequence ID" value="NC_000917.1"/>
</dbReference>
<dbReference type="SMR" id="O28599"/>
<dbReference type="STRING" id="224325.AF_1674"/>
<dbReference type="PaxDb" id="224325-AF_1674"/>
<dbReference type="EnsemblBacteria" id="AAB89576">
    <property type="protein sequence ID" value="AAB89576"/>
    <property type="gene ID" value="AF_1674"/>
</dbReference>
<dbReference type="GeneID" id="24795417"/>
<dbReference type="KEGG" id="afu:AF_1674"/>
<dbReference type="eggNOG" id="arCOG00982">
    <property type="taxonomic scope" value="Archaea"/>
</dbReference>
<dbReference type="HOGENOM" id="CLU_038362_0_0_2"/>
<dbReference type="OrthoDB" id="8656at2157"/>
<dbReference type="PhylomeDB" id="O28599"/>
<dbReference type="UniPathway" id="UPA00940"/>
<dbReference type="Proteomes" id="UP000002199">
    <property type="component" value="Chromosome"/>
</dbReference>
<dbReference type="GO" id="GO:0005737">
    <property type="term" value="C:cytoplasm"/>
    <property type="evidence" value="ECO:0007669"/>
    <property type="project" value="UniProtKB-SubCell"/>
</dbReference>
<dbReference type="GO" id="GO:0106357">
    <property type="term" value="F:glycerol-1-phosphate dehydrogenase (NAD+) activity"/>
    <property type="evidence" value="ECO:0007669"/>
    <property type="project" value="RHEA"/>
</dbReference>
<dbReference type="GO" id="GO:0106358">
    <property type="term" value="F:glycerol-1-phosphate dehydrogenase (NADP+) activity"/>
    <property type="evidence" value="ECO:0007669"/>
    <property type="project" value="RHEA"/>
</dbReference>
<dbReference type="GO" id="GO:0046872">
    <property type="term" value="F:metal ion binding"/>
    <property type="evidence" value="ECO:0007669"/>
    <property type="project" value="UniProtKB-KW"/>
</dbReference>
<dbReference type="GO" id="GO:0006650">
    <property type="term" value="P:glycerophospholipid metabolic process"/>
    <property type="evidence" value="ECO:0007669"/>
    <property type="project" value="UniProtKB-UniRule"/>
</dbReference>
<dbReference type="GO" id="GO:0008654">
    <property type="term" value="P:phospholipid biosynthetic process"/>
    <property type="evidence" value="ECO:0007669"/>
    <property type="project" value="UniProtKB-KW"/>
</dbReference>
<dbReference type="Gene3D" id="3.40.50.1970">
    <property type="match status" value="1"/>
</dbReference>
<dbReference type="Gene3D" id="1.20.1090.10">
    <property type="entry name" value="Dehydroquinate synthase-like - alpha domain"/>
    <property type="match status" value="1"/>
</dbReference>
<dbReference type="HAMAP" id="MF_00497_A">
    <property type="entry name" value="G1P_dehydrogenase_A"/>
    <property type="match status" value="1"/>
</dbReference>
<dbReference type="InterPro" id="IPR023002">
    <property type="entry name" value="G1P_dehydrogenase_arc"/>
</dbReference>
<dbReference type="InterPro" id="IPR032837">
    <property type="entry name" value="G1PDH"/>
</dbReference>
<dbReference type="InterPro" id="IPR016205">
    <property type="entry name" value="Glycerol_DH"/>
</dbReference>
<dbReference type="PANTHER" id="PTHR43616">
    <property type="entry name" value="GLYCEROL DEHYDROGENASE"/>
    <property type="match status" value="1"/>
</dbReference>
<dbReference type="PANTHER" id="PTHR43616:SF5">
    <property type="entry name" value="GLYCEROL DEHYDROGENASE 1"/>
    <property type="match status" value="1"/>
</dbReference>
<dbReference type="Pfam" id="PF13685">
    <property type="entry name" value="Fe-ADH_2"/>
    <property type="match status" value="1"/>
</dbReference>
<dbReference type="PIRSF" id="PIRSF000112">
    <property type="entry name" value="Glycerol_dehydrogenase"/>
    <property type="match status" value="1"/>
</dbReference>
<dbReference type="SUPFAM" id="SSF56796">
    <property type="entry name" value="Dehydroquinate synthase-like"/>
    <property type="match status" value="1"/>
</dbReference>
<name>G1PDH_ARCFU</name>
<organism>
    <name type="scientific">Archaeoglobus fulgidus (strain ATCC 49558 / DSM 4304 / JCM 9628 / NBRC 100126 / VC-16)</name>
    <dbReference type="NCBI Taxonomy" id="224325"/>
    <lineage>
        <taxon>Archaea</taxon>
        <taxon>Methanobacteriati</taxon>
        <taxon>Methanobacteriota</taxon>
        <taxon>Archaeoglobi</taxon>
        <taxon>Archaeoglobales</taxon>
        <taxon>Archaeoglobaceae</taxon>
        <taxon>Archaeoglobus</taxon>
    </lineage>
</organism>
<sequence>MRFKTVDLPYHVYIGENVISKLPKVLRSLDANYFLLLTDEVVKNLVVVNLKETLKDFEYDMMLVESAKMEEARKIVLRGGFADYDAVVGVGGGKVLDVSKVVSSELNASMISVPTTASHDGIASPVASFKENGKPISISTNPPSAVIADLNIIKNCPIRLLRSGYGDLVSNISSVKDWQLARDLVGEDYNEVAASIAVMPAQLMVSKADELDLTLPPHLLMLLRGLIMSGVAIAFVGSSRPASGAEHKFSHALDYLGYGNGTHGEQVALGTIIMEYLHEKYYGRGDWEQIKMSLEKVHAPTTAKEIGLTREQVIEALMLATKLRKKRFTILEAVKPTKEEFELVVEKTGVA</sequence>
<protein>
    <recommendedName>
        <fullName evidence="1">Glycerol-1-phosphate dehydrogenase [NAD(P)+]</fullName>
        <shortName evidence="1 3">G1P dehydrogenase</shortName>
        <shortName evidence="1">G1PDH</shortName>
        <ecNumber evidence="1 2">1.1.1.261</ecNumber>
    </recommendedName>
    <alternativeName>
        <fullName evidence="1">Enantiomeric glycerophosphate synthase</fullName>
    </alternativeName>
    <alternativeName>
        <fullName evidence="1">sn-glycerol-1-phosphate dehydrogenase</fullName>
    </alternativeName>
</protein>
<reference key="1">
    <citation type="journal article" date="1997" name="Nature">
        <title>The complete genome sequence of the hyperthermophilic, sulphate-reducing archaeon Archaeoglobus fulgidus.</title>
        <authorList>
            <person name="Klenk H.-P."/>
            <person name="Clayton R.A."/>
            <person name="Tomb J.-F."/>
            <person name="White O."/>
            <person name="Nelson K.E."/>
            <person name="Ketchum K.A."/>
            <person name="Dodson R.J."/>
            <person name="Gwinn M.L."/>
            <person name="Hickey E.K."/>
            <person name="Peterson J.D."/>
            <person name="Richardson D.L."/>
            <person name="Kerlavage A.R."/>
            <person name="Graham D.E."/>
            <person name="Kyrpides N.C."/>
            <person name="Fleischmann R.D."/>
            <person name="Quackenbush J."/>
            <person name="Lee N.H."/>
            <person name="Sutton G.G."/>
            <person name="Gill S.R."/>
            <person name="Kirkness E.F."/>
            <person name="Dougherty B.A."/>
            <person name="McKenney K."/>
            <person name="Adams M.D."/>
            <person name="Loftus B.J."/>
            <person name="Peterson S.N."/>
            <person name="Reich C.I."/>
            <person name="McNeil L.K."/>
            <person name="Badger J.H."/>
            <person name="Glodek A."/>
            <person name="Zhou L."/>
            <person name="Overbeek R."/>
            <person name="Gocayne J.D."/>
            <person name="Weidman J.F."/>
            <person name="McDonald L.A."/>
            <person name="Utterback T.R."/>
            <person name="Cotton M.D."/>
            <person name="Spriggs T."/>
            <person name="Artiach P."/>
            <person name="Kaine B.P."/>
            <person name="Sykes S.M."/>
            <person name="Sadow P.W."/>
            <person name="D'Andrea K.P."/>
            <person name="Bowman C."/>
            <person name="Fujii C."/>
            <person name="Garland S.A."/>
            <person name="Mason T.M."/>
            <person name="Olsen G.J."/>
            <person name="Fraser C.M."/>
            <person name="Smith H.O."/>
            <person name="Woese C.R."/>
            <person name="Venter J.C."/>
        </authorList>
    </citation>
    <scope>NUCLEOTIDE SEQUENCE [LARGE SCALE GENOMIC DNA]</scope>
    <source>
        <strain>ATCC 49558 / DSM 4304 / JCM 9628 / NBRC 100126 / VC-16</strain>
    </source>
</reference>
<reference key="2">
    <citation type="journal article" date="2009" name="Metab. Eng.">
        <title>Reconstruction of the archaeal isoprenoid ether lipid biosynthesis pathway in Escherichia coli through digeranylgeranylglyceryl phosphate.</title>
        <authorList>
            <person name="Lai D."/>
            <person name="Lluncor B."/>
            <person name="Schroeder I."/>
            <person name="Gunsalus R.P."/>
            <person name="Liao J.C."/>
            <person name="Monbouquette H.G."/>
        </authorList>
    </citation>
    <scope>FUNCTION</scope>
    <scope>CATALYTIC ACTIVITY</scope>
    <scope>PATHWAY</scope>
    <source>
        <strain>ATCC 49558 / DSM 4304 / JCM 9628 / NBRC 100126 / VC-16</strain>
    </source>
</reference>
<gene>
    <name evidence="1 3" type="primary">egsA</name>
    <name type="synonym">gldA</name>
    <name type="ordered locus">AF_1674</name>
</gene>
<accession>O28599</accession>
<comment type="function">
    <text evidence="1 2">Catalyzes the NAD(P)H-dependent reduction of dihydroxyacetonephosphate (DHAP or glycerone phosphate) to glycerol 1-phosphate (G1P). The G1P thus generated is used as the glycerophosphate backbone of phospholipids in the cellular membranes of Archaea.</text>
</comment>
<comment type="catalytic activity">
    <reaction evidence="1 2">
        <text>sn-glycerol 1-phosphate + NAD(+) = dihydroxyacetone phosphate + NADH + H(+)</text>
        <dbReference type="Rhea" id="RHEA:21412"/>
        <dbReference type="ChEBI" id="CHEBI:15378"/>
        <dbReference type="ChEBI" id="CHEBI:57540"/>
        <dbReference type="ChEBI" id="CHEBI:57642"/>
        <dbReference type="ChEBI" id="CHEBI:57685"/>
        <dbReference type="ChEBI" id="CHEBI:57945"/>
        <dbReference type="EC" id="1.1.1.261"/>
    </reaction>
</comment>
<comment type="catalytic activity">
    <reaction evidence="1 2">
        <text>sn-glycerol 1-phosphate + NADP(+) = dihydroxyacetone phosphate + NADPH + H(+)</text>
        <dbReference type="Rhea" id="RHEA:21416"/>
        <dbReference type="ChEBI" id="CHEBI:15378"/>
        <dbReference type="ChEBI" id="CHEBI:57642"/>
        <dbReference type="ChEBI" id="CHEBI:57685"/>
        <dbReference type="ChEBI" id="CHEBI:57783"/>
        <dbReference type="ChEBI" id="CHEBI:58349"/>
        <dbReference type="EC" id="1.1.1.261"/>
    </reaction>
</comment>
<comment type="cofactor">
    <cofactor evidence="1">
        <name>Zn(2+)</name>
        <dbReference type="ChEBI" id="CHEBI:29105"/>
    </cofactor>
    <text evidence="1">Binds 1 zinc ion per subunit.</text>
</comment>
<comment type="pathway">
    <text evidence="1 2">Membrane lipid metabolism; glycerophospholipid metabolism.</text>
</comment>
<comment type="subcellular location">
    <subcellularLocation>
        <location evidence="1">Cytoplasm</location>
    </subcellularLocation>
</comment>
<comment type="similarity">
    <text evidence="1">Belongs to the glycerol-1-phosphate dehydrogenase family.</text>
</comment>
<feature type="chain" id="PRO_0000157339" description="Glycerol-1-phosphate dehydrogenase [NAD(P)+]">
    <location>
        <begin position="1"/>
        <end position="351"/>
    </location>
</feature>
<feature type="binding site" evidence="1">
    <location>
        <begin position="93"/>
        <end position="97"/>
    </location>
    <ligand>
        <name>NAD(+)</name>
        <dbReference type="ChEBI" id="CHEBI:57540"/>
    </ligand>
</feature>
<feature type="binding site" evidence="1">
    <location>
        <begin position="115"/>
        <end position="118"/>
    </location>
    <ligand>
        <name>NAD(+)</name>
        <dbReference type="ChEBI" id="CHEBI:57540"/>
    </ligand>
</feature>
<feature type="binding site" evidence="1">
    <location>
        <position position="120"/>
    </location>
    <ligand>
        <name>substrate</name>
    </ligand>
</feature>
<feature type="binding site" evidence="1">
    <location>
        <position position="124"/>
    </location>
    <ligand>
        <name>NAD(+)</name>
        <dbReference type="ChEBI" id="CHEBI:57540"/>
    </ligand>
</feature>
<feature type="binding site" evidence="1">
    <location>
        <position position="167"/>
    </location>
    <ligand>
        <name>substrate</name>
    </ligand>
</feature>
<feature type="binding site" evidence="1">
    <location>
        <position position="167"/>
    </location>
    <ligand>
        <name>Zn(2+)</name>
        <dbReference type="ChEBI" id="CHEBI:29105"/>
        <note>catalytic</note>
    </ligand>
</feature>
<feature type="binding site" evidence="1">
    <location>
        <position position="247"/>
    </location>
    <ligand>
        <name>Zn(2+)</name>
        <dbReference type="ChEBI" id="CHEBI:29105"/>
        <note>catalytic</note>
    </ligand>
</feature>
<feature type="binding site" evidence="1">
    <location>
        <position position="251"/>
    </location>
    <ligand>
        <name>substrate</name>
    </ligand>
</feature>
<feature type="binding site" evidence="1">
    <location>
        <position position="263"/>
    </location>
    <ligand>
        <name>Zn(2+)</name>
        <dbReference type="ChEBI" id="CHEBI:29105"/>
        <note>catalytic</note>
    </ligand>
</feature>
<evidence type="ECO:0000255" key="1">
    <source>
        <dbReference type="HAMAP-Rule" id="MF_00497"/>
    </source>
</evidence>
<evidence type="ECO:0000269" key="2">
    <source>
    </source>
</evidence>
<evidence type="ECO:0000303" key="3">
    <source>
    </source>
</evidence>
<proteinExistence type="evidence at protein level"/>